<sequence length="217" mass="24847">MATGSRTSLLLAFGLLCLPWLQEGSAFPTIPLSRLFDNAMLRAHRLHQLAFDTYQEFEEAYIPKEQKYSFLQNPQTSLCFSESIPTPSNREETQQKSNLELLRISLLLIQSWLEPVQFLRSVFANSLVYGASDSNVYDLLKDLEEGIQTLMGRLEDGSPRTGQIFKQTYSKFDTNSHNDDALLKNYGLLYCFRKDMDKVETFLRIVQCRSVEGSCGF</sequence>
<reference key="1">
    <citation type="journal article" date="1979" name="Nucleic Acids Res.">
        <title>Molecular cloning and nucleotide sequence of the human growth hormone structural gene.</title>
        <authorList>
            <person name="Roskam W."/>
            <person name="Rougeon F."/>
        </authorList>
    </citation>
    <scope>NUCLEOTIDE SEQUENCE [MRNA] (ISOFORM 1)</scope>
</reference>
<reference key="2">
    <citation type="journal article" date="1979" name="Science">
        <title>Human growth hormone: complementary DNA cloning and expression in bacteria.</title>
        <authorList>
            <person name="Martial J.A."/>
            <person name="Hallewell R.A."/>
            <person name="Baxter J.D."/>
            <person name="Goodman H.M."/>
        </authorList>
    </citation>
    <scope>NUCLEOTIDE SEQUENCE [MRNA] (ISOFORM 1)</scope>
</reference>
<reference key="3">
    <citation type="journal article" date="1981" name="Nucleic Acids Res.">
        <title>Human growth hormone DNA sequence and mRNA structure: possible alternative splicing.</title>
        <authorList>
            <person name="Denoto F.M."/>
            <person name="Moore D.D."/>
            <person name="Goodman H.M."/>
        </authorList>
    </citation>
    <scope>NUCLEOTIDE SEQUENCE [GENOMIC DNA] (ISOFORM 1)</scope>
    <scope>POSSIBLE ALTERNATIVE SPLICING</scope>
</reference>
<reference key="4">
    <citation type="journal article" date="1982" name="DNA">
        <title>The human growth hormone gene family: nucleotide sequences show recent divergence and predict a new polypeptide hormone.</title>
        <authorList>
            <person name="Seeburg P.H."/>
        </authorList>
    </citation>
    <scope>NUCLEOTIDE SEQUENCE [GENOMIC DNA]</scope>
</reference>
<reference key="5">
    <citation type="journal article" date="1989" name="Genomics">
        <title>The human growth hormone locus: nucleotide sequence, biology, and evolution.</title>
        <authorList>
            <person name="Chen E.Y."/>
            <person name="Liao Y.C."/>
            <person name="Smith D.H."/>
            <person name="Barrera-Saldana H.A."/>
            <person name="Gelinas R.E."/>
            <person name="Seeburg P.H."/>
        </authorList>
    </citation>
    <scope>NUCLEOTIDE SEQUENCE [GENOMIC DNA]</scope>
</reference>
<reference key="6">
    <citation type="submission" date="1999-09" db="EMBL/GenBank/DDBJ databases">
        <title>A novel gene expressed in human pituitary.</title>
        <authorList>
            <person name="Gu J."/>
            <person name="Huang Q.-H."/>
            <person name="Li N."/>
            <person name="Xu S.-H."/>
            <person name="Han Z.-G."/>
            <person name="Fu G."/>
            <person name="Chen Z."/>
        </authorList>
    </citation>
    <scope>NUCLEOTIDE SEQUENCE [MRNA] (ISOFORM 3)</scope>
    <source>
        <tissue>Pituitary</tissue>
    </source>
</reference>
<reference key="7">
    <citation type="journal article" date="2008" name="Hum. Mutat.">
        <title>Complex signatures of locus-specific selective pressures and gene conversion on human growth hormone/chorionic somatomammotropin genes.</title>
        <authorList>
            <person name="Sedman L."/>
            <person name="Padhukasahasram B."/>
            <person name="Kelgo P."/>
            <person name="Laan M."/>
        </authorList>
    </citation>
    <scope>NUCLEOTIDE SEQUENCE [GENOMIC DNA]</scope>
</reference>
<reference key="8">
    <citation type="journal article" date="2006" name="Nature">
        <title>DNA sequence of human chromosome 17 and analysis of rearrangement in the human lineage.</title>
        <authorList>
            <person name="Zody M.C."/>
            <person name="Garber M."/>
            <person name="Adams D.J."/>
            <person name="Sharpe T."/>
            <person name="Harrow J."/>
            <person name="Lupski J.R."/>
            <person name="Nicholson C."/>
            <person name="Searle S.M."/>
            <person name="Wilming L."/>
            <person name="Young S.K."/>
            <person name="Abouelleil A."/>
            <person name="Allen N.R."/>
            <person name="Bi W."/>
            <person name="Bloom T."/>
            <person name="Borowsky M.L."/>
            <person name="Bugalter B.E."/>
            <person name="Butler J."/>
            <person name="Chang J.L."/>
            <person name="Chen C.-K."/>
            <person name="Cook A."/>
            <person name="Corum B."/>
            <person name="Cuomo C.A."/>
            <person name="de Jong P.J."/>
            <person name="DeCaprio D."/>
            <person name="Dewar K."/>
            <person name="FitzGerald M."/>
            <person name="Gilbert J."/>
            <person name="Gibson R."/>
            <person name="Gnerre S."/>
            <person name="Goldstein S."/>
            <person name="Grafham D.V."/>
            <person name="Grocock R."/>
            <person name="Hafez N."/>
            <person name="Hagopian D.S."/>
            <person name="Hart E."/>
            <person name="Norman C.H."/>
            <person name="Humphray S."/>
            <person name="Jaffe D.B."/>
            <person name="Jones M."/>
            <person name="Kamal M."/>
            <person name="Khodiyar V.K."/>
            <person name="LaButti K."/>
            <person name="Laird G."/>
            <person name="Lehoczky J."/>
            <person name="Liu X."/>
            <person name="Lokyitsang T."/>
            <person name="Loveland J."/>
            <person name="Lui A."/>
            <person name="Macdonald P."/>
            <person name="Major J.E."/>
            <person name="Matthews L."/>
            <person name="Mauceli E."/>
            <person name="McCarroll S.A."/>
            <person name="Mihalev A.H."/>
            <person name="Mudge J."/>
            <person name="Nguyen C."/>
            <person name="Nicol R."/>
            <person name="O'Leary S.B."/>
            <person name="Osoegawa K."/>
            <person name="Schwartz D.C."/>
            <person name="Shaw-Smith C."/>
            <person name="Stankiewicz P."/>
            <person name="Steward C."/>
            <person name="Swarbreck D."/>
            <person name="Venkataraman V."/>
            <person name="Whittaker C.A."/>
            <person name="Yang X."/>
            <person name="Zimmer A.R."/>
            <person name="Bradley A."/>
            <person name="Hubbard T."/>
            <person name="Birren B.W."/>
            <person name="Rogers J."/>
            <person name="Lander E.S."/>
            <person name="Nusbaum C."/>
        </authorList>
    </citation>
    <scope>NUCLEOTIDE SEQUENCE [LARGE SCALE GENOMIC DNA]</scope>
</reference>
<reference key="9">
    <citation type="submission" date="2005-09" db="EMBL/GenBank/DDBJ databases">
        <authorList>
            <person name="Mural R.J."/>
            <person name="Istrail S."/>
            <person name="Sutton G."/>
            <person name="Florea L."/>
            <person name="Halpern A.L."/>
            <person name="Mobarry C.M."/>
            <person name="Lippert R."/>
            <person name="Walenz B."/>
            <person name="Shatkay H."/>
            <person name="Dew I."/>
            <person name="Miller J.R."/>
            <person name="Flanigan M.J."/>
            <person name="Edwards N.J."/>
            <person name="Bolanos R."/>
            <person name="Fasulo D."/>
            <person name="Halldorsson B.V."/>
            <person name="Hannenhalli S."/>
            <person name="Turner R."/>
            <person name="Yooseph S."/>
            <person name="Lu F."/>
            <person name="Nusskern D.R."/>
            <person name="Shue B.C."/>
            <person name="Zheng X.H."/>
            <person name="Zhong F."/>
            <person name="Delcher A.L."/>
            <person name="Huson D.H."/>
            <person name="Kravitz S.A."/>
            <person name="Mouchard L."/>
            <person name="Reinert K."/>
            <person name="Remington K.A."/>
            <person name="Clark A.G."/>
            <person name="Waterman M.S."/>
            <person name="Eichler E.E."/>
            <person name="Adams M.D."/>
            <person name="Hunkapiller M.W."/>
            <person name="Myers E.W."/>
            <person name="Venter J.C."/>
        </authorList>
    </citation>
    <scope>NUCLEOTIDE SEQUENCE [LARGE SCALE GENOMIC DNA]</scope>
</reference>
<reference key="10">
    <citation type="journal article" date="2000" name="Proc. Natl. Acad. Sci. U.S.A.">
        <title>Gene expression profiling in the human hypothalamus-pituitary-adrenal axis and full-length cDNA cloning.</title>
        <authorList>
            <person name="Hu R.-M."/>
            <person name="Han Z.-G."/>
            <person name="Song H.-D."/>
            <person name="Peng Y.-D."/>
            <person name="Huang Q.-H."/>
            <person name="Ren S.-X."/>
            <person name="Gu Y.-J."/>
            <person name="Huang C.-H."/>
            <person name="Li Y.-B."/>
            <person name="Jiang C.-L."/>
            <person name="Fu G."/>
            <person name="Zhang Q.-H."/>
            <person name="Gu B.-W."/>
            <person name="Dai M."/>
            <person name="Mao Y.-F."/>
            <person name="Gao G.-F."/>
            <person name="Rong R."/>
            <person name="Ye M."/>
            <person name="Zhou J."/>
            <person name="Xu S.-H."/>
            <person name="Gu J."/>
            <person name="Shi J.-X."/>
            <person name="Jin W.-R."/>
            <person name="Zhang C.-K."/>
            <person name="Wu T.-M."/>
            <person name="Huang G.-Y."/>
            <person name="Chen Z."/>
            <person name="Chen M.-D."/>
            <person name="Chen J.-L."/>
        </authorList>
    </citation>
    <scope>NUCLEOTIDE SEQUENCE [LARGE SCALE MRNA] (ISOFORM 4)</scope>
    <source>
        <tissue>Pituitary</tissue>
    </source>
</reference>
<reference key="11">
    <citation type="journal article" date="2004" name="Genome Res.">
        <title>The status, quality, and expansion of the NIH full-length cDNA project: the Mammalian Gene Collection (MGC).</title>
        <authorList>
            <consortium name="The MGC Project Team"/>
        </authorList>
    </citation>
    <scope>NUCLEOTIDE SEQUENCE [LARGE SCALE MRNA] (ISOFORMS 1; 2 AND 5)</scope>
    <source>
        <tissue>Pituitary</tissue>
    </source>
</reference>
<reference key="12">
    <citation type="journal article" date="1985" name="Gene">
        <title>Periplasmic production of correctly processed human growth hormone in Escherichia coli: natural and bacterial signal sequences are interchangeable.</title>
        <authorList>
            <person name="Gray G.L."/>
            <person name="Baldridge J.S."/>
            <person name="McKeown K.S."/>
            <person name="Heyneker H.L."/>
            <person name="Chang C.N."/>
        </authorList>
    </citation>
    <scope>NUCLEOTIDE SEQUENCE [MRNA] OF 1-26</scope>
</reference>
<reference key="13">
    <citation type="journal article" date="1969" name="Arch. Biochem. Biophys.">
        <title>Human pituitary growth hormone. XIX. The primary structure of the hormone.</title>
        <authorList>
            <person name="Li C.H."/>
            <person name="Dixon J.S."/>
            <person name="Liu W.-K."/>
        </authorList>
    </citation>
    <scope>PROTEIN SEQUENCE OF 27-217</scope>
    <scope>SUBCELLULAR LOCATION</scope>
</reference>
<reference key="14">
    <citation type="journal article" date="1971" name="Arch. Biochem. Biophys.">
        <title>Human pituitary growth hormone. 32. The primary structure of the hormone: revision.</title>
        <authorList>
            <person name="Li C.H."/>
            <person name="Dixon J.S."/>
        </authorList>
    </citation>
    <scope>PROTEIN SEQUENCE OF 27-217</scope>
    <scope>SEQUENCE REVISION</scope>
</reference>
<reference key="15">
    <citation type="journal article" date="1972" name="Int. J. Pept. Protein Res.">
        <title>Sequence comparison of human pituitary growth hormone, human chorionic somatomammotropin, and ovine pituitary growth and lactogenic hormones.</title>
        <authorList>
            <person name="Bewley T.A."/>
            <person name="Dixon J.S."/>
            <person name="Li C.H."/>
        </authorList>
    </citation>
    <scope>SEQUENCE REVISION</scope>
</reference>
<reference key="16">
    <citation type="journal article" date="1971" name="Nature New Biol.">
        <title>Revised primary structure for human growth hormone.</title>
        <authorList>
            <person name="Niall H.D."/>
        </authorList>
    </citation>
    <scope>PROTEIN SEQUENCE OF 27-61 AND 102-124</scope>
    <scope>SUBCELLULAR LOCATION</scope>
</reference>
<reference key="17">
    <citation type="journal article" date="1971" name="Proc. Natl. Acad. Sci. U.S.A.">
        <title>Sequences of pituitary and placental lactogenic and growth hormones: evolution from a primordial peptide by gene reduplication.</title>
        <authorList>
            <person name="Niall H.D."/>
            <person name="Hogan M.L."/>
            <person name="Sauer R."/>
            <person name="Rosenblum I.Y."/>
            <person name="Greenwood F.C."/>
        </authorList>
    </citation>
    <scope>SEQUENCE REVISION TO 119-120 AND 157-159</scope>
</reference>
<reference key="18">
    <citation type="book" date="1972" name="Prolactin and carcinogenesis, Proc. fourth tenovus workshop prolactin">
        <title>The chemistry of the human lactogenic hormones.</title>
        <editorList>
            <person name="Griffiths K."/>
        </editorList>
        <authorList>
            <person name="Niall H.D."/>
        </authorList>
    </citation>
    <scope>SEQUENCE REVISION</scope>
</reference>
<reference key="19">
    <citation type="journal article" date="1981" name="J. Biol. Chem.">
        <title>The 20,000 molecular weight variant of human growth hormone. Preparation and some physical and chemical properties.</title>
        <authorList>
            <person name="Chapman G.E."/>
            <person name="Rogers K.M."/>
            <person name="Brittain T."/>
            <person name="Bradshaw R.A."/>
            <person name="Bates O.J."/>
            <person name="Turner C."/>
            <person name="Cary P.D."/>
            <person name="Crane-Robinson C."/>
        </authorList>
    </citation>
    <scope>PROTEIN SEQUENCE OF 27-79 (ISOFORM 2)</scope>
</reference>
<reference key="20">
    <citation type="journal article" date="1980" name="Biochem. Biophys. Res. Commun.">
        <title>The 20,000-dalton variant of human growth hormone: location of the amino acid deletions.</title>
        <authorList>
            <person name="Lewis U.J."/>
            <person name="Bonewald L.F."/>
            <person name="Lewis L.J."/>
        </authorList>
    </citation>
    <scope>PROTEIN SEQUENCE OF 46-80 (ISOFORM 2)</scope>
</reference>
<reference key="21">
    <citation type="journal article" date="1981" name="J. Biol. Chem.">
        <title>Altered proteolytic cleavage of human growth hormone as a result of deamidation.</title>
        <authorList>
            <person name="Lewis U.J."/>
            <person name="Singh R.N."/>
            <person name="Bonewald L.F."/>
            <person name="Seavey B.K."/>
        </authorList>
    </citation>
    <scope>DEAMIDATION AT GLN-163 AND ASN-178</scope>
</reference>
<reference key="22">
    <citation type="journal article" date="1993" name="Hum. Mol. Genet.">
        <title>A new mutation causing inherited growth hormone deficiency: a compound heterozygote of a 6.7 kb deletion and a two base deletion in the third exon of the GH-1 gene.</title>
        <authorList>
            <person name="Igarashi Y."/>
            <person name="Ogawa M."/>
            <person name="Kamijo T."/>
            <person name="Iwatani N."/>
            <person name="Nishi Y."/>
            <person name="Kohno H."/>
            <person name="Masumura T."/>
            <person name="Koga J."/>
        </authorList>
    </citation>
    <scope>INVOLVEMENT IN IGHD1A</scope>
</reference>
<reference key="23">
    <citation type="journal article" date="2004" name="Proteomics">
        <title>Identification and characterization of phosphorylated proteins in the human pituitary.</title>
        <authorList>
            <person name="Giorgianni F."/>
            <person name="Beranova-Giorgianni S."/>
            <person name="Desiderio D.M."/>
        </authorList>
    </citation>
    <scope>PHOSPHORYLATION AT SER-132 AND SER-176</scope>
    <source>
        <tissue>Pituitary</tissue>
    </source>
</reference>
<reference key="24">
    <citation type="journal article" date="1999" name="Horm. Res. 51 Suppl.">
        <title>Growth hormone heterogeneity in human pituitary and plasma.</title>
        <authorList>
            <person name="Baumann G."/>
        </authorList>
    </citation>
    <scope>REVIEW</scope>
</reference>
<reference key="25">
    <citation type="journal article" date="2006" name="Pituitary">
        <title>Phosphoproteomic analysis of the human pituitary.</title>
        <authorList>
            <person name="Beranova-Giorgianni S."/>
            <person name="Zhao Y."/>
            <person name="Desiderio D.M."/>
            <person name="Giorgianni F."/>
        </authorList>
    </citation>
    <scope>IDENTIFICATION BY MASS SPECTROMETRY [LARGE SCALE ANALYSIS]</scope>
    <source>
        <tissue>Pituitary</tissue>
    </source>
</reference>
<reference key="26">
    <citation type="journal article" date="1987" name="Proteins">
        <title>Prediction of the three-dimensional structure of human growth hormone.</title>
        <authorList>
            <person name="Cohen F.E."/>
            <person name="Kuntz I.D."/>
        </authorList>
    </citation>
    <scope>3D-STRUCTURE MODELING</scope>
</reference>
<reference key="27">
    <citation type="journal article" date="1992" name="Science">
        <title>Human growth hormone and extracellular domain of its receptor: crystal structure of the complex.</title>
        <authorList>
            <person name="de Vos A.M."/>
            <person name="Ultsch M."/>
            <person name="Kossiakoff A.A."/>
        </authorList>
    </citation>
    <scope>X-RAY CRYSTALLOGRAPHY (2.8 ANGSTROMS)</scope>
</reference>
<reference key="28">
    <citation type="journal article" date="1994" name="Nature">
        <title>The X-ray structure of a growth hormone-prolactin receptor complex.</title>
        <authorList>
            <person name="Somers W."/>
            <person name="Ultsch M."/>
            <person name="de Vos A.M."/>
            <person name="Kossiakoff A.A."/>
        </authorList>
    </citation>
    <scope>X-RAY CRYSTALLOGRAPHY (2.9 ANGSTROMS)</scope>
</reference>
<reference key="29">
    <citation type="journal article" date="1995" name="Protein Pept. Lett.">
        <title>The crystal-structure of wild-type growth-hormone at 2.5-A resolution.</title>
        <authorList>
            <person name="Chantalat L."/>
            <person name="Chirgadze N.Y."/>
            <person name="Jones N."/>
            <person name="Korber F."/>
            <person name="Navaza J."/>
            <person name="Pavlovsk A.G."/>
            <person name="Wlodawer A."/>
        </authorList>
    </citation>
    <scope>X-RAY CRYSTALLOGRAPHY (2.5 ANGSTROMS)</scope>
</reference>
<reference key="30">
    <citation type="journal article" date="1996" name="J. Biol. Chem.">
        <title>Crystal structure of an antagonist mutant of human growth hormone, G120R, in complex with its receptor at 2.9-A resolution.</title>
        <authorList>
            <person name="Sundstroem M."/>
            <person name="Lundqvist T."/>
            <person name="Roedin J."/>
            <person name="Giebel L.B."/>
            <person name="Milligan D."/>
            <person name="Norstedt G."/>
        </authorList>
    </citation>
    <scope>X-RAY CRYSTALLOGRAPHY (2.5 ANGSTROMS)</scope>
</reference>
<reference key="31">
    <citation type="journal article" date="1996" name="N. Engl. J. Med.">
        <title>Short stature caused by a mutant growth hormone.</title>
        <authorList>
            <person name="Takahashi Y."/>
            <person name="Kaji H."/>
            <person name="Okimura Y."/>
            <person name="Goji K."/>
            <person name="Abe H."/>
            <person name="Chihara K."/>
        </authorList>
    </citation>
    <scope>VARIANT KWKS CYS-103</scope>
</reference>
<reference key="32">
    <citation type="journal article" date="1996" name="N. Engl. J. Med.">
        <authorList>
            <person name="Takahashi Y."/>
            <person name="Kaji H."/>
            <person name="Okimura Y."/>
            <person name="Goji K."/>
            <person name="Abe H."/>
            <person name="Chihara K."/>
        </authorList>
    </citation>
    <scope>ERRATUM OF PUBMED:8552145</scope>
</reference>
<reference key="33">
    <citation type="journal article" date="1997" name="Endocr. J.">
        <title>Detection of growth hormone gene defects by dideoxy fingerprinting (ddF).</title>
        <authorList>
            <person name="Miyata I."/>
            <person name="Cogan J.D."/>
            <person name="Prince M.A."/>
            <person name="Kamijo T."/>
            <person name="Ogawa M."/>
            <person name="Phillips J.A. III"/>
        </authorList>
    </citation>
    <scope>VARIANT ALA-3</scope>
    <scope>VARIANT IGHD2 HIS-209</scope>
</reference>
<reference key="34">
    <citation type="journal article" date="1997" name="J. Clin. Invest.">
        <title>Biologically inactive growth hormone caused by an amino acid substitution.</title>
        <authorList>
            <person name="Takahashi Y."/>
            <person name="Shirono H."/>
            <person name="Arisaka O."/>
            <person name="Takahashi K."/>
            <person name="Yagi T."/>
            <person name="Koga J."/>
            <person name="Kaji H."/>
            <person name="Okimura Y."/>
            <person name="Abe H."/>
            <person name="Tanaka T."/>
            <person name="Chihara K."/>
        </authorList>
    </citation>
    <scope>VARIANT KWKS GLY-138</scope>
</reference>
<reference key="35">
    <citation type="journal article" date="1999" name="Nat. Genet.">
        <title>Characterization of single-nucleotide polymorphisms in coding regions of human genes.</title>
        <authorList>
            <person name="Cargill M."/>
            <person name="Altshuler D."/>
            <person name="Ireland J."/>
            <person name="Sklar P."/>
            <person name="Ardlie K."/>
            <person name="Patil N."/>
            <person name="Shaw N."/>
            <person name="Lane C.R."/>
            <person name="Lim E.P."/>
            <person name="Kalyanaraman N."/>
            <person name="Nemesh J."/>
            <person name="Ziaugra L."/>
            <person name="Friedland L."/>
            <person name="Rolfe A."/>
            <person name="Warrington J."/>
            <person name="Lipshutz R."/>
            <person name="Daley G.Q."/>
            <person name="Lander E.S."/>
        </authorList>
    </citation>
    <scope>VARIANT CYS-105</scope>
</reference>
<reference key="36">
    <citation type="journal article" date="1999" name="Nat. Genet.">
        <authorList>
            <person name="Cargill M."/>
            <person name="Altshuler D."/>
            <person name="Ireland J."/>
            <person name="Sklar P."/>
            <person name="Ardlie K."/>
            <person name="Patil N."/>
            <person name="Shaw N."/>
            <person name="Lane C.R."/>
            <person name="Lim E.P."/>
            <person name="Kalyanaraman N."/>
            <person name="Nemesh J."/>
            <person name="Ziaugra L."/>
            <person name="Friedland L."/>
            <person name="Rolfe A."/>
            <person name="Warrington J."/>
            <person name="Lipshutz R."/>
            <person name="Daley G.Q."/>
            <person name="Lander E.S."/>
        </authorList>
    </citation>
    <scope>ERRATUM OF PUBMED:10391209</scope>
</reference>
<reference key="37">
    <citation type="journal article" date="2001" name="J. Clin. Endocrinol. Metab.">
        <title>Autosomal dominant GH deficiency due to an Arg183His GH-1 gene mutation: clinical and molecular evidence of impaired regulated GH secretion.</title>
        <authorList>
            <person name="Deladoey J."/>
            <person name="Stocker P."/>
            <person name="Mullis P.E."/>
        </authorList>
    </citation>
    <scope>VARIANT IGHD2 HIS-209</scope>
</reference>
<reference key="38">
    <citation type="journal article" date="2003" name="Hum. Mutat.">
        <title>Novel mutations of the growth hormone 1 (GH1) gene disclosed by modulation of the clinical selection criteria for individuals with short stature.</title>
        <authorList>
            <person name="Millar D.S."/>
            <person name="Lewis M.D."/>
            <person name="Horan M."/>
            <person name="Newsway V."/>
            <person name="Easter T.E."/>
            <person name="Gregory J.W."/>
            <person name="Fryklund L."/>
            <person name="Norin M."/>
            <person name="Crowne E.C."/>
            <person name="Davies S.J."/>
            <person name="Edwards P."/>
            <person name="Kirk J."/>
            <person name="Waldron K."/>
            <person name="Smith P.J."/>
            <person name="Phillips J.A. III"/>
            <person name="Scanlon M.F."/>
            <person name="Krawczak M."/>
            <person name="Cooper D.N."/>
            <person name="Procter A.M."/>
        </authorList>
    </citation>
    <scope>VARIANTS IGHD1B PRO-16; ASN-37; CYS-42; ILE-53; ARG-67; ASP-73; PHE-97; LYS-100; LEU-117; CYS-134; ARG-134 AND ALA-201</scope>
    <scope>VARIANTS ALA-3 AND ILE-136</scope>
</reference>
<reference key="39">
    <citation type="journal article" date="2004" name="J. Clin. Endocrinol. Metab.">
        <title>A novel dysfunctional growth hormone variant (Ile179Met) exhibits a decreased ability to activate the extracellular signal-regulated kinase pathway.</title>
        <authorList>
            <person name="Lewis M.D."/>
            <person name="Horan M."/>
            <person name="Millar D.S."/>
            <person name="Newsway V."/>
            <person name="Easter T.E."/>
            <person name="Fryklund L."/>
            <person name="Gregory J.W."/>
            <person name="Norin M."/>
            <person name="Del Valle C.-J."/>
            <person name="Lopez-Siguero J.P."/>
            <person name="Canete R."/>
            <person name="Lopez-Canti L.F."/>
            <person name="Diaz-Torrado N."/>
            <person name="Espino R."/>
            <person name="Ulied A."/>
            <person name="Scanlon M.F."/>
            <person name="Procter A.M."/>
            <person name="Cooper D.N."/>
        </authorList>
    </citation>
    <scope>VARIANT SHORT STATURE MET-205</scope>
    <scope>VARIANTS ALA-3 AND ILE-136</scope>
</reference>
<reference key="40">
    <citation type="journal article" date="2005" name="J. Clin. Endocrinol. Metab.">
        <title>Short stature caused by a biologically inactive mutant growth hormone (GH-C53S).</title>
        <authorList>
            <person name="Besson A."/>
            <person name="Salemi S."/>
            <person name="Deladoeey J."/>
            <person name="Vuissoz J.-M."/>
            <person name="Eble A."/>
            <person name="Bidlingmaier M."/>
            <person name="Buergi S."/>
            <person name="Honegger U."/>
            <person name="Flueck C."/>
            <person name="Mullis P.E."/>
        </authorList>
    </citation>
    <scope>VARIANT SHORT STATURE SER-79</scope>
    <scope>CHARACTERIZATION OF VARIANT SHORT STATURE SER-79</scope>
</reference>
<reference key="41">
    <citation type="journal article" date="2007" name="J. Clin. Endocrinol. Metab.">
        <title>Evaluation of the biological activity of a growth hormone (GH) mutant (R77C) and its impact on GH responsiveness and stature.</title>
        <authorList>
            <person name="Petkovic V."/>
            <person name="Besson A."/>
            <person name="Thevis M."/>
            <person name="Lochmatter D."/>
            <person name="Eble A."/>
            <person name="Fluck C.E."/>
            <person name="Mullis P.E."/>
        </authorList>
    </citation>
    <scope>CHARACTERIZATION OF VARIANT KWKS CYS-103</scope>
</reference>
<evidence type="ECO:0000250" key="1"/>
<evidence type="ECO:0000269" key="2">
    <source>
    </source>
</evidence>
<evidence type="ECO:0000269" key="3">
    <source>
    </source>
</evidence>
<evidence type="ECO:0000269" key="4">
    <source>
    </source>
</evidence>
<evidence type="ECO:0000269" key="5">
    <source>
    </source>
</evidence>
<evidence type="ECO:0000269" key="6">
    <source>
    </source>
</evidence>
<evidence type="ECO:0000269" key="7">
    <source>
    </source>
</evidence>
<evidence type="ECO:0000269" key="8">
    <source>
    </source>
</evidence>
<evidence type="ECO:0000269" key="9">
    <source>
    </source>
</evidence>
<evidence type="ECO:0000269" key="10">
    <source>
    </source>
</evidence>
<evidence type="ECO:0000269" key="11">
    <source>
    </source>
</evidence>
<evidence type="ECO:0000269" key="12">
    <source>
    </source>
</evidence>
<evidence type="ECO:0000269" key="13">
    <source>
    </source>
</evidence>
<evidence type="ECO:0000269" key="14">
    <source>
    </source>
</evidence>
<evidence type="ECO:0000269" key="15">
    <source>
    </source>
</evidence>
<evidence type="ECO:0000269" key="16">
    <source>
    </source>
</evidence>
<evidence type="ECO:0000303" key="17">
    <source>
    </source>
</evidence>
<evidence type="ECO:0000303" key="18">
    <source>
    </source>
</evidence>
<evidence type="ECO:0000303" key="19">
    <source ref="6"/>
</evidence>
<evidence type="ECO:0000305" key="20"/>
<evidence type="ECO:0007829" key="21">
    <source>
        <dbReference type="PDB" id="1AXI"/>
    </source>
</evidence>
<evidence type="ECO:0007829" key="22">
    <source>
        <dbReference type="PDB" id="1HGU"/>
    </source>
</evidence>
<evidence type="ECO:0007829" key="23">
    <source>
        <dbReference type="PDB" id="1HUW"/>
    </source>
</evidence>
<keyword id="KW-0002">3D-structure</keyword>
<keyword id="KW-0025">Alternative splicing</keyword>
<keyword id="KW-0903">Direct protein sequencing</keyword>
<keyword id="KW-0225">Disease variant</keyword>
<keyword id="KW-1015">Disulfide bond</keyword>
<keyword id="KW-0242">Dwarfism</keyword>
<keyword id="KW-0372">Hormone</keyword>
<keyword id="KW-0479">Metal-binding</keyword>
<keyword id="KW-0582">Pharmaceutical</keyword>
<keyword id="KW-0597">Phosphoprotein</keyword>
<keyword id="KW-1267">Proteomics identification</keyword>
<keyword id="KW-1185">Reference proteome</keyword>
<keyword id="KW-0964">Secreted</keyword>
<keyword id="KW-0732">Signal</keyword>
<keyword id="KW-0862">Zinc</keyword>
<dbReference type="EMBL" id="V00519">
    <property type="protein sequence ID" value="CAA23778.1"/>
    <property type="molecule type" value="mRNA"/>
</dbReference>
<dbReference type="EMBL" id="V00520">
    <property type="protein sequence ID" value="CAA23779.1"/>
    <property type="molecule type" value="Genomic_DNA"/>
</dbReference>
<dbReference type="EMBL" id="M13438">
    <property type="protein sequence ID" value="AAA98618.1"/>
    <property type="molecule type" value="Genomic_DNA"/>
</dbReference>
<dbReference type="EMBL" id="J03071">
    <property type="protein sequence ID" value="AAA52549.1"/>
    <property type="molecule type" value="Genomic_DNA"/>
</dbReference>
<dbReference type="EMBL" id="AF185611">
    <property type="protein sequence ID" value="AAG09699.1"/>
    <property type="molecule type" value="mRNA"/>
</dbReference>
<dbReference type="EMBL" id="AF110644">
    <property type="protein sequence ID" value="AAD48584.1"/>
    <property type="molecule type" value="mRNA"/>
</dbReference>
<dbReference type="EMBL" id="EU421712">
    <property type="protein sequence ID" value="ABZ88713.1"/>
    <property type="molecule type" value="Genomic_DNA"/>
</dbReference>
<dbReference type="EMBL" id="AC127029">
    <property type="status" value="NOT_ANNOTATED_CDS"/>
    <property type="molecule type" value="Genomic_DNA"/>
</dbReference>
<dbReference type="EMBL" id="CH471109">
    <property type="protein sequence ID" value="EAW94233.1"/>
    <property type="molecule type" value="Genomic_DNA"/>
</dbReference>
<dbReference type="EMBL" id="BC062475">
    <property type="protein sequence ID" value="AAH62475.1"/>
    <property type="molecule type" value="mRNA"/>
</dbReference>
<dbReference type="EMBL" id="BC075012">
    <property type="protein sequence ID" value="AAH75012.1"/>
    <property type="molecule type" value="mRNA"/>
</dbReference>
<dbReference type="EMBL" id="BC075013">
    <property type="protein sequence ID" value="AAH75013.1"/>
    <property type="molecule type" value="mRNA"/>
</dbReference>
<dbReference type="EMBL" id="BC090045">
    <property type="protein sequence ID" value="AAH90045.1"/>
    <property type="molecule type" value="mRNA"/>
</dbReference>
<dbReference type="EMBL" id="CD106566">
    <property type="status" value="NOT_ANNOTATED_CDS"/>
    <property type="molecule type" value="mRNA"/>
</dbReference>
<dbReference type="EMBL" id="M14398">
    <property type="protein sequence ID" value="AAA52554.1"/>
    <property type="molecule type" value="mRNA"/>
</dbReference>
<dbReference type="CCDS" id="CCDS11653.1">
    <molecule id="P01241-1"/>
</dbReference>
<dbReference type="CCDS" id="CCDS11654.1">
    <molecule id="P01241-5"/>
</dbReference>
<dbReference type="CCDS" id="CCDS45760.1">
    <molecule id="P01241-2"/>
</dbReference>
<dbReference type="PIR" id="A93731">
    <property type="entry name" value="STHU"/>
</dbReference>
<dbReference type="RefSeq" id="NP_000506.2">
    <molecule id="P01241-1"/>
    <property type="nucleotide sequence ID" value="NM_000515.4"/>
</dbReference>
<dbReference type="RefSeq" id="NP_072053.1">
    <molecule id="P01241-2"/>
    <property type="nucleotide sequence ID" value="NM_022559.4"/>
</dbReference>
<dbReference type="RefSeq" id="NP_072054.1">
    <molecule id="P01241-5"/>
    <property type="nucleotide sequence ID" value="NM_022560.4"/>
</dbReference>
<dbReference type="PDB" id="1A22">
    <property type="method" value="X-ray"/>
    <property type="resolution" value="2.60 A"/>
    <property type="chains" value="A=27-217"/>
</dbReference>
<dbReference type="PDB" id="1AXI">
    <property type="method" value="X-ray"/>
    <property type="resolution" value="2.10 A"/>
    <property type="chains" value="A=27-217"/>
</dbReference>
<dbReference type="PDB" id="1BP3">
    <property type="method" value="X-ray"/>
    <property type="resolution" value="2.90 A"/>
    <property type="chains" value="A=27-217"/>
</dbReference>
<dbReference type="PDB" id="1HGU">
    <property type="method" value="X-ray"/>
    <property type="resolution" value="2.50 A"/>
    <property type="chains" value="A=27-217"/>
</dbReference>
<dbReference type="PDB" id="1HUW">
    <property type="method" value="X-ray"/>
    <property type="resolution" value="2.00 A"/>
    <property type="chains" value="A=27-217"/>
</dbReference>
<dbReference type="PDB" id="1HWG">
    <property type="method" value="X-ray"/>
    <property type="resolution" value="2.50 A"/>
    <property type="chains" value="A=27-217"/>
</dbReference>
<dbReference type="PDB" id="1HWH">
    <property type="method" value="X-ray"/>
    <property type="resolution" value="2.90 A"/>
    <property type="chains" value="A=27-217"/>
</dbReference>
<dbReference type="PDB" id="1KF9">
    <property type="method" value="X-ray"/>
    <property type="resolution" value="2.60 A"/>
    <property type="chains" value="A/D=27-217"/>
</dbReference>
<dbReference type="PDB" id="3HHR">
    <property type="method" value="X-ray"/>
    <property type="resolution" value="2.80 A"/>
    <property type="chains" value="A=27-216"/>
</dbReference>
<dbReference type="PDB" id="6QIO">
    <property type="method" value="X-ray"/>
    <property type="resolution" value="1.95 A"/>
    <property type="chains" value="D=27-217"/>
</dbReference>
<dbReference type="PDBsum" id="1A22"/>
<dbReference type="PDBsum" id="1AXI"/>
<dbReference type="PDBsum" id="1BP3"/>
<dbReference type="PDBsum" id="1HGU"/>
<dbReference type="PDBsum" id="1HUW"/>
<dbReference type="PDBsum" id="1HWG"/>
<dbReference type="PDBsum" id="1HWH"/>
<dbReference type="PDBsum" id="1KF9"/>
<dbReference type="PDBsum" id="3HHR"/>
<dbReference type="PDBsum" id="6QIO"/>
<dbReference type="BMRB" id="P01241"/>
<dbReference type="SASBDB" id="P01241"/>
<dbReference type="SMR" id="P01241"/>
<dbReference type="BioGRID" id="108955">
    <property type="interactions" value="13"/>
</dbReference>
<dbReference type="CORUM" id="P01241"/>
<dbReference type="DIP" id="DIP-1022N"/>
<dbReference type="FunCoup" id="P01241">
    <property type="interactions" value="1023"/>
</dbReference>
<dbReference type="IntAct" id="P01241">
    <property type="interactions" value="7"/>
</dbReference>
<dbReference type="STRING" id="9606.ENSP00000312673"/>
<dbReference type="GlyGen" id="P01241">
    <property type="glycosylation" value="2 sites"/>
</dbReference>
<dbReference type="iPTMnet" id="P01241"/>
<dbReference type="MetOSite" id="P01241"/>
<dbReference type="PhosphoSitePlus" id="P01241"/>
<dbReference type="BioMuta" id="GH1"/>
<dbReference type="MassIVE" id="P01241"/>
<dbReference type="PaxDb" id="9606-ENSP00000312673"/>
<dbReference type="PeptideAtlas" id="P01241"/>
<dbReference type="ProteomicsDB" id="51353">
    <molecule id="P01241-1"/>
</dbReference>
<dbReference type="ProteomicsDB" id="51354">
    <molecule id="P01241-2"/>
</dbReference>
<dbReference type="ProteomicsDB" id="51355">
    <molecule id="P01241-3"/>
</dbReference>
<dbReference type="ProteomicsDB" id="51356">
    <molecule id="P01241-4"/>
</dbReference>
<dbReference type="ProteomicsDB" id="982"/>
<dbReference type="ABCD" id="P01241">
    <property type="antibodies" value="4 sequenced antibodies"/>
</dbReference>
<dbReference type="Antibodypedia" id="52672">
    <property type="antibodies" value="1433 antibodies from 39 providers"/>
</dbReference>
<dbReference type="DNASU" id="2688"/>
<dbReference type="Ensembl" id="ENST00000323322.10">
    <molecule id="P01241-1"/>
    <property type="protein sequence ID" value="ENSP00000312673.5"/>
    <property type="gene ID" value="ENSG00000259384.7"/>
</dbReference>
<dbReference type="Ensembl" id="ENST00000351388.8">
    <molecule id="P01241-5"/>
    <property type="protein sequence ID" value="ENSP00000343791.4"/>
    <property type="gene ID" value="ENSG00000259384.7"/>
</dbReference>
<dbReference type="Ensembl" id="ENST00000458650.6">
    <molecule id="P01241-2"/>
    <property type="protein sequence ID" value="ENSP00000408486.2"/>
    <property type="gene ID" value="ENSG00000259384.7"/>
</dbReference>
<dbReference type="GeneID" id="2688"/>
<dbReference type="KEGG" id="hsa:2688"/>
<dbReference type="MANE-Select" id="ENST00000323322.10">
    <property type="protein sequence ID" value="ENSP00000312673.5"/>
    <property type="RefSeq nucleotide sequence ID" value="NM_000515.5"/>
    <property type="RefSeq protein sequence ID" value="NP_000506.2"/>
</dbReference>
<dbReference type="UCSC" id="uc002jdi.4">
    <molecule id="P01241-1"/>
    <property type="organism name" value="human"/>
</dbReference>
<dbReference type="AGR" id="HGNC:4261"/>
<dbReference type="CTD" id="2688"/>
<dbReference type="DisGeNET" id="2688"/>
<dbReference type="GeneCards" id="GH1"/>
<dbReference type="HGNC" id="HGNC:4261">
    <property type="gene designation" value="GH1"/>
</dbReference>
<dbReference type="HPA" id="ENSG00000259384">
    <property type="expression patterns" value="Tissue enriched (pituitary)"/>
</dbReference>
<dbReference type="MalaCards" id="GH1"/>
<dbReference type="MIM" id="139250">
    <property type="type" value="gene"/>
</dbReference>
<dbReference type="MIM" id="173100">
    <property type="type" value="phenotype"/>
</dbReference>
<dbReference type="MIM" id="262400">
    <property type="type" value="phenotype"/>
</dbReference>
<dbReference type="MIM" id="262650">
    <property type="type" value="phenotype"/>
</dbReference>
<dbReference type="MIM" id="612781">
    <property type="type" value="phenotype"/>
</dbReference>
<dbReference type="neXtProt" id="NX_P01241"/>
<dbReference type="OpenTargets" id="ENSG00000259384"/>
<dbReference type="Orphanet" id="231662">
    <property type="disease" value="Isolated growth hormone deficiency type IA"/>
</dbReference>
<dbReference type="Orphanet" id="231671">
    <property type="disease" value="Isolated growth hormone deficiency type IB"/>
</dbReference>
<dbReference type="Orphanet" id="231679">
    <property type="disease" value="Isolated growth hormone deficiency type II"/>
</dbReference>
<dbReference type="Orphanet" id="629">
    <property type="disease" value="Short stature due to growth hormone qualitative anomaly"/>
</dbReference>
<dbReference type="PharmGKB" id="PA171"/>
<dbReference type="VEuPathDB" id="HostDB:ENSG00000259384"/>
<dbReference type="eggNOG" id="ENOG502R5GJ">
    <property type="taxonomic scope" value="Eukaryota"/>
</dbReference>
<dbReference type="GeneTree" id="ENSGT00950000182818"/>
<dbReference type="HOGENOM" id="CLU_088274_2_1_1"/>
<dbReference type="InParanoid" id="P01241"/>
<dbReference type="OMA" id="VAYCYSE"/>
<dbReference type="OrthoDB" id="9519099at2759"/>
<dbReference type="PAN-GO" id="P01241">
    <property type="GO annotations" value="10 GO annotations based on evolutionary models"/>
</dbReference>
<dbReference type="PhylomeDB" id="P01241"/>
<dbReference type="TreeFam" id="TF332592"/>
<dbReference type="PathwayCommons" id="P01241"/>
<dbReference type="Reactome" id="R-HSA-1170546">
    <property type="pathway name" value="Prolactin receptor signaling"/>
</dbReference>
<dbReference type="Reactome" id="R-HSA-422085">
    <property type="pathway name" value="Synthesis, secretion, and deacylation of Ghrelin"/>
</dbReference>
<dbReference type="Reactome" id="R-HSA-982772">
    <property type="pathway name" value="Growth hormone receptor signaling"/>
</dbReference>
<dbReference type="SABIO-RK" id="P01241"/>
<dbReference type="SignaLink" id="P01241"/>
<dbReference type="SIGNOR" id="P01241"/>
<dbReference type="BioGRID-ORCS" id="2688">
    <property type="hits" value="10 hits in 1113 CRISPR screens"/>
</dbReference>
<dbReference type="ChiTaRS" id="GH1">
    <property type="organism name" value="human"/>
</dbReference>
<dbReference type="EvolutionaryTrace" id="P01241"/>
<dbReference type="GenomeRNAi" id="2688"/>
<dbReference type="Pharos" id="P01241">
    <property type="development level" value="Tbio"/>
</dbReference>
<dbReference type="PRO" id="PR:P01241"/>
<dbReference type="Proteomes" id="UP000005640">
    <property type="component" value="Chromosome 17"/>
</dbReference>
<dbReference type="RNAct" id="P01241">
    <property type="molecule type" value="protein"/>
</dbReference>
<dbReference type="Bgee" id="ENSG00000259384">
    <property type="expression patterns" value="Expressed in pituitary gland and 81 other cell types or tissues"/>
</dbReference>
<dbReference type="ExpressionAtlas" id="P01241">
    <property type="expression patterns" value="baseline and differential"/>
</dbReference>
<dbReference type="GO" id="GO:0031904">
    <property type="term" value="C:endosome lumen"/>
    <property type="evidence" value="ECO:0000304"/>
    <property type="project" value="Reactome"/>
</dbReference>
<dbReference type="GO" id="GO:0005576">
    <property type="term" value="C:extracellular region"/>
    <property type="evidence" value="ECO:0000304"/>
    <property type="project" value="Reactome"/>
</dbReference>
<dbReference type="GO" id="GO:0005615">
    <property type="term" value="C:extracellular space"/>
    <property type="evidence" value="ECO:0000314"/>
    <property type="project" value="BHF-UCL"/>
</dbReference>
<dbReference type="GO" id="GO:0070195">
    <property type="term" value="C:growth hormone receptor complex"/>
    <property type="evidence" value="ECO:0000314"/>
    <property type="project" value="CAFA"/>
</dbReference>
<dbReference type="GO" id="GO:0005125">
    <property type="term" value="F:cytokine activity"/>
    <property type="evidence" value="ECO:0000314"/>
    <property type="project" value="BHF-UCL"/>
</dbReference>
<dbReference type="GO" id="GO:0008083">
    <property type="term" value="F:growth factor activity"/>
    <property type="evidence" value="ECO:0000314"/>
    <property type="project" value="UniProt"/>
</dbReference>
<dbReference type="GO" id="GO:0070186">
    <property type="term" value="F:growth hormone activity"/>
    <property type="evidence" value="ECO:0000314"/>
    <property type="project" value="UniProtKB"/>
</dbReference>
<dbReference type="GO" id="GO:0005131">
    <property type="term" value="F:growth hormone receptor binding"/>
    <property type="evidence" value="ECO:0000314"/>
    <property type="project" value="MGI"/>
</dbReference>
<dbReference type="GO" id="GO:0005179">
    <property type="term" value="F:hormone activity"/>
    <property type="evidence" value="ECO:0000318"/>
    <property type="project" value="GO_Central"/>
</dbReference>
<dbReference type="GO" id="GO:0046872">
    <property type="term" value="F:metal ion binding"/>
    <property type="evidence" value="ECO:0007669"/>
    <property type="project" value="UniProtKB-KW"/>
</dbReference>
<dbReference type="GO" id="GO:0005148">
    <property type="term" value="F:prolactin receptor binding"/>
    <property type="evidence" value="ECO:0000314"/>
    <property type="project" value="AgBase"/>
</dbReference>
<dbReference type="GO" id="GO:0048513">
    <property type="term" value="P:animal organ development"/>
    <property type="evidence" value="ECO:0000318"/>
    <property type="project" value="GO_Central"/>
</dbReference>
<dbReference type="GO" id="GO:0070977">
    <property type="term" value="P:bone maturation"/>
    <property type="evidence" value="ECO:0000314"/>
    <property type="project" value="BHF-UCL"/>
</dbReference>
<dbReference type="GO" id="GO:0007259">
    <property type="term" value="P:cell surface receptor signaling pathway via JAK-STAT"/>
    <property type="evidence" value="ECO:0000314"/>
    <property type="project" value="BHF-UCL"/>
</dbReference>
<dbReference type="GO" id="GO:0097696">
    <property type="term" value="P:cell surface receptor signaling pathway via STAT"/>
    <property type="evidence" value="ECO:0000314"/>
    <property type="project" value="BHF-UCL"/>
</dbReference>
<dbReference type="GO" id="GO:0019221">
    <property type="term" value="P:cytokine-mediated signaling pathway"/>
    <property type="evidence" value="ECO:0000314"/>
    <property type="project" value="BHF-UCL"/>
</dbReference>
<dbReference type="GO" id="GO:0060396">
    <property type="term" value="P:growth hormone receptor signaling pathway"/>
    <property type="evidence" value="ECO:0000314"/>
    <property type="project" value="BHF-UCL"/>
</dbReference>
<dbReference type="GO" id="GO:0060397">
    <property type="term" value="P:growth hormone receptor signaling pathway via JAK-STAT"/>
    <property type="evidence" value="ECO:0000314"/>
    <property type="project" value="BHF-UCL"/>
</dbReference>
<dbReference type="GO" id="GO:0010828">
    <property type="term" value="P:positive regulation of D-glucose transmembrane transport"/>
    <property type="evidence" value="ECO:0000314"/>
    <property type="project" value="MGI"/>
</dbReference>
<dbReference type="GO" id="GO:0043568">
    <property type="term" value="P:positive regulation of insulin-like growth factor receptor signaling pathway"/>
    <property type="evidence" value="ECO:0000314"/>
    <property type="project" value="BHF-UCL"/>
</dbReference>
<dbReference type="GO" id="GO:0043406">
    <property type="term" value="P:positive regulation of MAP kinase activity"/>
    <property type="evidence" value="ECO:0000304"/>
    <property type="project" value="BHF-UCL"/>
</dbReference>
<dbReference type="GO" id="GO:0040018">
    <property type="term" value="P:positive regulation of multicellular organism growth"/>
    <property type="evidence" value="ECO:0000314"/>
    <property type="project" value="BHF-UCL"/>
</dbReference>
<dbReference type="GO" id="GO:0051897">
    <property type="term" value="P:positive regulation of phosphatidylinositol 3-kinase/protein kinase B signal transduction"/>
    <property type="evidence" value="ECO:0000314"/>
    <property type="project" value="BHF-UCL"/>
</dbReference>
<dbReference type="GO" id="GO:0046427">
    <property type="term" value="P:positive regulation of receptor signaling pathway via JAK-STAT"/>
    <property type="evidence" value="ECO:0000314"/>
    <property type="project" value="BHF-UCL"/>
</dbReference>
<dbReference type="GO" id="GO:0032355">
    <property type="term" value="P:response to estradiol"/>
    <property type="evidence" value="ECO:0000314"/>
    <property type="project" value="BHF-UCL"/>
</dbReference>
<dbReference type="GO" id="GO:0031667">
    <property type="term" value="P:response to nutrient levels"/>
    <property type="evidence" value="ECO:0000318"/>
    <property type="project" value="GO_Central"/>
</dbReference>
<dbReference type="CDD" id="cd10285">
    <property type="entry name" value="somatotropin_like"/>
    <property type="match status" value="1"/>
</dbReference>
<dbReference type="FunFam" id="1.20.1250.10:FF:000012">
    <property type="entry name" value="Growth hormone 1"/>
    <property type="match status" value="1"/>
</dbReference>
<dbReference type="Gene3D" id="1.20.1250.10">
    <property type="match status" value="1"/>
</dbReference>
<dbReference type="InterPro" id="IPR009079">
    <property type="entry name" value="4_helix_cytokine-like_core"/>
</dbReference>
<dbReference type="InterPro" id="IPR034975">
    <property type="entry name" value="Somatotropin"/>
</dbReference>
<dbReference type="InterPro" id="IPR001400">
    <property type="entry name" value="Somatotropin/Prolactin"/>
</dbReference>
<dbReference type="InterPro" id="IPR018116">
    <property type="entry name" value="Somatotropin_CS"/>
</dbReference>
<dbReference type="PANTHER" id="PTHR11417:SF2">
    <property type="entry name" value="SOMATOTROPIN"/>
    <property type="match status" value="1"/>
</dbReference>
<dbReference type="PANTHER" id="PTHR11417">
    <property type="entry name" value="SOMATOTROPIN,PROLACTIN"/>
    <property type="match status" value="1"/>
</dbReference>
<dbReference type="Pfam" id="PF00103">
    <property type="entry name" value="Hormone_1"/>
    <property type="match status" value="1"/>
</dbReference>
<dbReference type="PRINTS" id="PR00836">
    <property type="entry name" value="SOMATOTROPIN"/>
</dbReference>
<dbReference type="SUPFAM" id="SSF47266">
    <property type="entry name" value="4-helical cytokines"/>
    <property type="match status" value="1"/>
</dbReference>
<dbReference type="PROSITE" id="PS00266">
    <property type="entry name" value="SOMATOTROPIN_1"/>
    <property type="match status" value="1"/>
</dbReference>
<dbReference type="PROSITE" id="PS00338">
    <property type="entry name" value="SOMATOTROPIN_2"/>
    <property type="match status" value="1"/>
</dbReference>
<name>SOMA_HUMAN</name>
<feature type="signal peptide" evidence="9 10 11">
    <location>
        <begin position="1"/>
        <end position="26"/>
    </location>
</feature>
<feature type="chain" id="PRO_0000032988" description="Somatotropin">
    <location>
        <begin position="27"/>
        <end position="217"/>
    </location>
</feature>
<feature type="binding site" evidence="1">
    <location>
        <position position="44"/>
    </location>
    <ligand>
        <name>Zn(2+)</name>
        <dbReference type="ChEBI" id="CHEBI:29105"/>
    </ligand>
</feature>
<feature type="binding site" evidence="1">
    <location>
        <position position="200"/>
    </location>
    <ligand>
        <name>Zn(2+)</name>
        <dbReference type="ChEBI" id="CHEBI:29105"/>
    </ligand>
</feature>
<feature type="modified residue" description="Phosphoserine" evidence="5">
    <location>
        <position position="132"/>
    </location>
</feature>
<feature type="modified residue" description="Deamidated glutamine; by deterioration" evidence="12">
    <location>
        <position position="163"/>
    </location>
</feature>
<feature type="modified residue" description="Phosphoserine" evidence="5">
    <location>
        <position position="176"/>
    </location>
</feature>
<feature type="modified residue" description="Deamidated asparagine; by deterioration" evidence="12">
    <location>
        <position position="178"/>
    </location>
</feature>
<feature type="disulfide bond" evidence="9">
    <location>
        <begin position="79"/>
        <end position="191"/>
    </location>
</feature>
<feature type="disulfide bond">
    <location>
        <begin position="208"/>
        <end position="215"/>
    </location>
</feature>
<feature type="splice variant" id="VSP_045642" description="In isoform 5." evidence="18">
    <location>
        <begin position="58"/>
        <end position="97"/>
    </location>
</feature>
<feature type="splice variant" id="VSP_006200" description="In isoform 2." evidence="18">
    <location>
        <begin position="58"/>
        <end position="72"/>
    </location>
</feature>
<feature type="splice variant" id="VSP_006201" description="In isoform 3." evidence="19">
    <location>
        <begin position="111"/>
        <end position="148"/>
    </location>
</feature>
<feature type="splice variant" id="VSP_006202" description="In isoform 4." evidence="17">
    <location>
        <begin position="117"/>
        <end position="162"/>
    </location>
</feature>
<feature type="sequence variant" id="VAR_011917" description="Found in patients with isolated growth hormone deficiency; dbSNP:rs2001345." evidence="4 6 15">
    <original>T</original>
    <variation>A</variation>
    <location>
        <position position="3"/>
    </location>
</feature>
<feature type="sequence variant" id="VAR_015801" description="In IGHD1B; suppresses secretion." evidence="4">
    <original>L</original>
    <variation>P</variation>
    <location>
        <position position="16"/>
    </location>
</feature>
<feature type="sequence variant" id="VAR_015802" description="In IGHD1B." evidence="4">
    <original>D</original>
    <variation>N</variation>
    <location>
        <position position="37"/>
    </location>
</feature>
<feature type="sequence variant" id="VAR_015803" description="In IGHD1B; reduced secretion; dbSNP:rs71640273." evidence="4">
    <original>R</original>
    <variation>C</variation>
    <location>
        <position position="42"/>
    </location>
</feature>
<feature type="sequence variant" id="VAR_015804" description="In IGHD1B; reduced ability to activate the JAK/STAT pathway; dbSNP:rs1907504572." evidence="4">
    <original>T</original>
    <variation>I</variation>
    <location>
        <position position="53"/>
    </location>
</feature>
<feature type="sequence variant" id="VAR_015805" description="In IGHD1B; reduced ability to activate the JAK/STAT pathway." evidence="4">
    <original>K</original>
    <variation>R</variation>
    <location>
        <position position="67"/>
    </location>
</feature>
<feature type="sequence variant" id="VAR_015806" description="In IGHD1B; reduced ability to activate the JAK/STAT pathway; dbSNP:rs71640276." evidence="4">
    <original>N</original>
    <variation>D</variation>
    <location>
        <position position="73"/>
    </location>
</feature>
<feature type="sequence variant" id="VAR_032702" description="In short stature; idiopathic autosomal; affects binding affinity of GH for GHR and the potency of GH to activate the JAK2/STAT5 signaling pathway; dbSNP:rs137853222." evidence="7">
    <original>C</original>
    <variation>S</variation>
    <location>
        <position position="79"/>
    </location>
</feature>
<feature type="sequence variant" id="VAR_015807" description="In IGHD1B; reduced ability to activate the JAK/STAT pathway." evidence="4">
    <original>S</original>
    <variation>F</variation>
    <location>
        <position position="97"/>
    </location>
</feature>
<feature type="sequence variant" id="VAR_015808" description="In IGHD1B." evidence="4">
    <original>E</original>
    <variation>K</variation>
    <location>
        <position position="100"/>
    </location>
</feature>
<feature type="sequence variant" id="VAR_015809" description="In KWKS; no effect on GHR signaling pathway; does not affect interaction with GHR; results in a stronger interaction with GHBP; does not affect subcellular location; dbSNP:rs137853220." evidence="8 14">
    <original>R</original>
    <variation>C</variation>
    <location>
        <position position="103"/>
    </location>
</feature>
<feature type="sequence variant" id="VAR_011918" description="In dbSNP:rs6174." evidence="2">
    <original>S</original>
    <variation>C</variation>
    <location>
        <position position="105"/>
    </location>
</feature>
<feature type="sequence variant" id="VAR_015810" description="In IGHD1B; reduced secretion." evidence="4">
    <original>Q</original>
    <variation>L</variation>
    <location>
        <position position="117"/>
    </location>
</feature>
<feature type="sequence variant" id="VAR_015811" description="In IGHD1B." evidence="4">
    <original>S</original>
    <variation>C</variation>
    <location>
        <position position="134"/>
    </location>
</feature>
<feature type="sequence variant" id="VAR_015812" description="In IGHD1B; reduced ability to activate the JAK/STAT pathway." evidence="4">
    <original>S</original>
    <variation>R</variation>
    <location>
        <position position="134"/>
    </location>
</feature>
<feature type="sequence variant" id="VAR_011919" description="In dbSNP:rs5388." evidence="4 6">
    <original>V</original>
    <variation>I</variation>
    <location>
        <position position="136"/>
    </location>
</feature>
<feature type="sequence variant" id="VAR_015813" description="In KWKS; loss of activity; dbSNP:rs137853221." evidence="16">
    <original>D</original>
    <variation>G</variation>
    <location>
        <position position="138"/>
    </location>
</feature>
<feature type="sequence variant" id="VAR_015814" description="In IGHD1B; reduced ability to activate the JAK/STAT pathway." evidence="4">
    <original>T</original>
    <variation>A</variation>
    <location>
        <position position="201"/>
    </location>
</feature>
<feature type="sequence variant" id="VAR_032703" description="In short stature; idiopathic autosomal; dbSNP:rs148474991." evidence="6">
    <original>I</original>
    <variation>M</variation>
    <location>
        <position position="205"/>
    </location>
</feature>
<feature type="sequence variant" id="VAR_015815" description="In IGHD2; dbSNP:rs137853223." evidence="3 15">
    <original>R</original>
    <variation>H</variation>
    <location>
        <position position="209"/>
    </location>
</feature>
<feature type="sequence conflict" description="In Ref. 1; CAA23778." evidence="20" ref="1">
    <original>L</original>
    <variation>P</variation>
    <location>
        <position position="35"/>
    </location>
</feature>
<feature type="sequence conflict" description="In Ref. 3; CAA23779." evidence="20" ref="3">
    <original>M</original>
    <variation>S</variation>
    <location>
        <position position="40"/>
    </location>
</feature>
<feature type="helix" evidence="23">
    <location>
        <begin position="32"/>
        <end position="61"/>
    </location>
</feature>
<feature type="helix" evidence="23">
    <location>
        <begin position="64"/>
        <end position="72"/>
    </location>
</feature>
<feature type="helix" evidence="22">
    <location>
        <begin position="73"/>
        <end position="75"/>
    </location>
</feature>
<feature type="turn" evidence="23">
    <location>
        <begin position="80"/>
        <end position="83"/>
    </location>
</feature>
<feature type="helix" evidence="23">
    <location>
        <begin position="90"/>
        <end position="94"/>
    </location>
</feature>
<feature type="helix" evidence="23">
    <location>
        <begin position="98"/>
        <end position="110"/>
    </location>
</feature>
<feature type="turn" evidence="23">
    <location>
        <begin position="111"/>
        <end position="114"/>
    </location>
</feature>
<feature type="helix" evidence="23">
    <location>
        <begin position="115"/>
        <end position="119"/>
    </location>
</feature>
<feature type="helix" evidence="23">
    <location>
        <begin position="120"/>
        <end position="125"/>
    </location>
</feature>
<feature type="turn" evidence="23">
    <location>
        <begin position="129"/>
        <end position="133"/>
    </location>
</feature>
<feature type="helix" evidence="23">
    <location>
        <begin position="136"/>
        <end position="154"/>
    </location>
</feature>
<feature type="helix" evidence="21">
    <location>
        <begin position="163"/>
        <end position="166"/>
    </location>
</feature>
<feature type="strand" evidence="22">
    <location>
        <begin position="178"/>
        <end position="180"/>
    </location>
</feature>
<feature type="helix" evidence="23">
    <location>
        <begin position="182"/>
        <end position="209"/>
    </location>
</feature>
<feature type="turn" evidence="21">
    <location>
        <begin position="212"/>
        <end position="216"/>
    </location>
</feature>
<protein>
    <recommendedName>
        <fullName>Somatotropin</fullName>
    </recommendedName>
    <alternativeName>
        <fullName>Growth hormone</fullName>
        <shortName>GH</shortName>
        <shortName>GH-N</shortName>
    </alternativeName>
    <alternativeName>
        <fullName>Growth hormone 1</fullName>
    </alternativeName>
    <alternativeName>
        <fullName>Pituitary growth hormone</fullName>
    </alternativeName>
</protein>
<gene>
    <name type="primary">GH1</name>
</gene>
<organism>
    <name type="scientific">Homo sapiens</name>
    <name type="common">Human</name>
    <dbReference type="NCBI Taxonomy" id="9606"/>
    <lineage>
        <taxon>Eukaryota</taxon>
        <taxon>Metazoa</taxon>
        <taxon>Chordata</taxon>
        <taxon>Craniata</taxon>
        <taxon>Vertebrata</taxon>
        <taxon>Euteleostomi</taxon>
        <taxon>Mammalia</taxon>
        <taxon>Eutheria</taxon>
        <taxon>Euarchontoglires</taxon>
        <taxon>Primates</taxon>
        <taxon>Haplorrhini</taxon>
        <taxon>Catarrhini</taxon>
        <taxon>Hominidae</taxon>
        <taxon>Homo</taxon>
    </lineage>
</organism>
<comment type="function">
    <text>Plays an important role in growth control. Its major role in stimulating body growth is to stimulate the liver and other tissues to secrete IGF1. It stimulates both the differentiation and proliferation of myoblasts. It also stimulates amino acid uptake and protein synthesis in muscle and other tissues.</text>
</comment>
<comment type="subunit">
    <text>Monomer, dimer, trimer, tetramer and pentamer, disulfide-linked or non-covalently associated, in homomeric and heteromeric combinations. Can also form a complex either with GHBP or with the alpha2-macroglobulin complex.</text>
</comment>
<comment type="interaction">
    <interactant intactId="EBI-1026046">
        <id>P01241</id>
    </interactant>
    <interactant intactId="EBI-286316">
        <id>P10912</id>
        <label>GHR</label>
    </interactant>
    <organismsDiffer>false</organismsDiffer>
    <experiments>4</experiments>
</comment>
<comment type="subcellular location">
    <subcellularLocation>
        <location evidence="10 11">Secreted</location>
    </subcellularLocation>
</comment>
<comment type="alternative products">
    <event type="alternative splicing"/>
    <isoform>
        <id>P01241-1</id>
        <name>1</name>
        <name>22 kDa</name>
        <sequence type="displayed"/>
    </isoform>
    <isoform>
        <id>P01241-2</id>
        <name>2</name>
        <name>20 kDa variant</name>
        <sequence type="described" ref="VSP_006200"/>
    </isoform>
    <isoform>
        <id>P01241-3</id>
        <name>3</name>
        <sequence type="described" ref="VSP_006201"/>
    </isoform>
    <isoform>
        <id>P01241-4</id>
        <name>4</name>
        <sequence type="described" ref="VSP_006202"/>
    </isoform>
    <isoform>
        <id>P01241-5</id>
        <name>5</name>
        <sequence type="described" ref="VSP_045642"/>
    </isoform>
    <text>Additional isoforms seem to exist.</text>
</comment>
<comment type="disease" evidence="13">
    <disease id="DI-01841">
        <name>Growth hormone deficiency, isolated, 1A</name>
        <acronym>IGHD1A</acronym>
        <description>An autosomal recessive, severe deficiency of growth hormone leading to dwarfism. Patients often develop antibodies to administered growth hormone.</description>
        <dbReference type="MIM" id="262400"/>
    </disease>
    <text>The disease is caused by variants affecting the gene represented in this entry.</text>
</comment>
<comment type="disease" evidence="4">
    <disease id="DI-03019">
        <name>Growth hormone deficiency, isolated, 1B</name>
        <acronym>IGHD1B</acronym>
        <description>An autosomal recessive deficiency of growth hormone leading to short stature. Patients have low but detectable levels of growth hormone, significantly retarded bone age, and a positive response and immunologic tolerance to growth hormone therapy.</description>
        <dbReference type="MIM" id="612781"/>
    </disease>
    <text>The disease is caused by variants affecting the gene represented in this entry.</text>
</comment>
<comment type="disease" evidence="8 14 16">
    <disease id="DI-01869">
        <name>Kowarski syndrome</name>
        <acronym>KWKS</acronym>
        <description>A syndrome clinically characterized by short stature associated with bioinactive growth hormone, normal or slightly increased growth hormone secretion, pathologically low insulin-like growth factor 1 levels, and normal catch-up growth on growth hormone replacement therapy.</description>
        <dbReference type="MIM" id="262650"/>
    </disease>
    <text>The disease is caused by variants affecting the gene represented in this entry.</text>
</comment>
<comment type="disease" evidence="3 15">
    <disease id="DI-01842">
        <name>Growth hormone deficiency, isolated, 2</name>
        <acronym>IGHD2</acronym>
        <description>An autosomal dominant deficiency of growth hormone leading to short stature. Clinical severity is variable. Patients have a positive response and immunologic tolerance to growth hormone therapy.</description>
        <dbReference type="MIM" id="173100"/>
    </disease>
    <text>The disease is caused by variants affecting the gene represented in this entry.</text>
</comment>
<comment type="pharmaceutical">
    <text>Available under the names Nutropin or Protropin (Genentech), Norditropin (Novo Nordisk), Genotropin (Pharmacia Upjohn), Humatrope (Eli Lilly) and Saizen or Serostim (Serono). Used for the treatment of growth hormone deficiency and for Turner's syndrome.</text>
</comment>
<comment type="miscellaneous">
    <text>Circulating GH shows a great heterogeneity due to alternative splicing, differential post-translational modifications of monomeric forms, oligomerization, optional binding to 2 different GH-binding proteins, and potentially proteolytic processing.</text>
</comment>
<comment type="similarity">
    <text evidence="20">Belongs to the somatotropin/prolactin family.</text>
</comment>
<comment type="online information" name="Wikipedia">
    <link uri="https://en.wikipedia.org/wiki/Growth_hormone"/>
    <text>Growth hormone entry</text>
</comment>
<proteinExistence type="evidence at protein level"/>
<accession>P01241</accession>
<accession>A6NEF6</accession>
<accession>Q14405</accession>
<accession>Q16631</accession>
<accession>Q5EB53</accession>
<accession>Q9HBZ1</accession>
<accession>Q9UMJ7</accession>
<accession>Q9UNL5</accession>